<accession>O29516</accession>
<gene>
    <name evidence="1" type="primary">priS</name>
    <name type="synonym">priA</name>
    <name type="ordered locus">AF_0742</name>
</gene>
<reference key="1">
    <citation type="journal article" date="1997" name="Nature">
        <title>The complete genome sequence of the hyperthermophilic, sulphate-reducing archaeon Archaeoglobus fulgidus.</title>
        <authorList>
            <person name="Klenk H.-P."/>
            <person name="Clayton R.A."/>
            <person name="Tomb J.-F."/>
            <person name="White O."/>
            <person name="Nelson K.E."/>
            <person name="Ketchum K.A."/>
            <person name="Dodson R.J."/>
            <person name="Gwinn M.L."/>
            <person name="Hickey E.K."/>
            <person name="Peterson J.D."/>
            <person name="Richardson D.L."/>
            <person name="Kerlavage A.R."/>
            <person name="Graham D.E."/>
            <person name="Kyrpides N.C."/>
            <person name="Fleischmann R.D."/>
            <person name="Quackenbush J."/>
            <person name="Lee N.H."/>
            <person name="Sutton G.G."/>
            <person name="Gill S.R."/>
            <person name="Kirkness E.F."/>
            <person name="Dougherty B.A."/>
            <person name="McKenney K."/>
            <person name="Adams M.D."/>
            <person name="Loftus B.J."/>
            <person name="Peterson S.N."/>
            <person name="Reich C.I."/>
            <person name="McNeil L.K."/>
            <person name="Badger J.H."/>
            <person name="Glodek A."/>
            <person name="Zhou L."/>
            <person name="Overbeek R."/>
            <person name="Gocayne J.D."/>
            <person name="Weidman J.F."/>
            <person name="McDonald L.A."/>
            <person name="Utterback T.R."/>
            <person name="Cotton M.D."/>
            <person name="Spriggs T."/>
            <person name="Artiach P."/>
            <person name="Kaine B.P."/>
            <person name="Sykes S.M."/>
            <person name="Sadow P.W."/>
            <person name="D'Andrea K.P."/>
            <person name="Bowman C."/>
            <person name="Fujii C."/>
            <person name="Garland S.A."/>
            <person name="Mason T.M."/>
            <person name="Olsen G.J."/>
            <person name="Fraser C.M."/>
            <person name="Smith H.O."/>
            <person name="Woese C.R."/>
            <person name="Venter J.C."/>
        </authorList>
    </citation>
    <scope>NUCLEOTIDE SEQUENCE [LARGE SCALE GENOMIC DNA]</scope>
    <source>
        <strain>ATCC 49558 / DSM 4304 / JCM 9628 / NBRC 100126 / VC-16</strain>
    </source>
</reference>
<protein>
    <recommendedName>
        <fullName evidence="1">DNA primase small subunit PriS</fullName>
        <ecNumber evidence="1">2.7.7.-</ecNumber>
    </recommendedName>
</protein>
<comment type="function">
    <text evidence="1">Catalytic subunit of DNA primase, an RNA polymerase that catalyzes the synthesis of short RNA molecules used as primers for DNA polymerase during DNA replication. The small subunit contains the primase catalytic core and has DNA synthesis activity on its own. Binding to the large subunit stabilizes and modulates the activity, increasing the rate of DNA synthesis while decreasing the length of the DNA fragments, and conferring RNA synthesis capability. The DNA polymerase activity may enable DNA primase to also catalyze primer extension after primer synthesis. May also play a role in DNA repair.</text>
</comment>
<comment type="cofactor">
    <cofactor evidence="1">
        <name>Mg(2+)</name>
        <dbReference type="ChEBI" id="CHEBI:18420"/>
    </cofactor>
    <cofactor evidence="1">
        <name>Mn(2+)</name>
        <dbReference type="ChEBI" id="CHEBI:29035"/>
    </cofactor>
</comment>
<comment type="subunit">
    <text evidence="1">Heterodimer of a small subunit (PriS) and a large subunit (PriL).</text>
</comment>
<comment type="similarity">
    <text evidence="1">Belongs to the eukaryotic-type primase small subunit family.</text>
</comment>
<feature type="chain" id="PRO_0000046738" description="DNA primase small subunit PriS">
    <location>
        <begin position="1"/>
        <end position="335"/>
    </location>
</feature>
<feature type="active site" evidence="1">
    <location>
        <position position="96"/>
    </location>
</feature>
<feature type="active site" evidence="1">
    <location>
        <position position="98"/>
    </location>
</feature>
<feature type="active site" evidence="1">
    <location>
        <position position="243"/>
    </location>
</feature>
<proteinExistence type="inferred from homology"/>
<keyword id="KW-0235">DNA replication</keyword>
<keyword id="KW-0240">DNA-directed RNA polymerase</keyword>
<keyword id="KW-0460">Magnesium</keyword>
<keyword id="KW-0464">Manganese</keyword>
<keyword id="KW-0479">Metal-binding</keyword>
<keyword id="KW-0548">Nucleotidyltransferase</keyword>
<keyword id="KW-0639">Primosome</keyword>
<keyword id="KW-1185">Reference proteome</keyword>
<keyword id="KW-0804">Transcription</keyword>
<keyword id="KW-0808">Transferase</keyword>
<dbReference type="EC" id="2.7.7.-" evidence="1"/>
<dbReference type="EMBL" id="AE000782">
    <property type="protein sequence ID" value="AAB90500.1"/>
    <property type="molecule type" value="Genomic_DNA"/>
</dbReference>
<dbReference type="PIR" id="F69342">
    <property type="entry name" value="F69342"/>
</dbReference>
<dbReference type="RefSeq" id="WP_048064280.1">
    <property type="nucleotide sequence ID" value="NC_000917.1"/>
</dbReference>
<dbReference type="SMR" id="O29516"/>
<dbReference type="STRING" id="224325.AF_0742"/>
<dbReference type="PaxDb" id="224325-AF_0742"/>
<dbReference type="EnsemblBacteria" id="AAB90500">
    <property type="protein sequence ID" value="AAB90500"/>
    <property type="gene ID" value="AF_0742"/>
</dbReference>
<dbReference type="GeneID" id="24794340"/>
<dbReference type="KEGG" id="afu:AF_0742"/>
<dbReference type="eggNOG" id="arCOG04110">
    <property type="taxonomic scope" value="Archaea"/>
</dbReference>
<dbReference type="HOGENOM" id="CLU_056123_1_0_2"/>
<dbReference type="OrthoDB" id="31125at2157"/>
<dbReference type="PhylomeDB" id="O29516"/>
<dbReference type="Proteomes" id="UP000002199">
    <property type="component" value="Chromosome"/>
</dbReference>
<dbReference type="GO" id="GO:0000428">
    <property type="term" value="C:DNA-directed RNA polymerase complex"/>
    <property type="evidence" value="ECO:0007669"/>
    <property type="project" value="UniProtKB-KW"/>
</dbReference>
<dbReference type="GO" id="GO:1990077">
    <property type="term" value="C:primosome complex"/>
    <property type="evidence" value="ECO:0007669"/>
    <property type="project" value="UniProtKB-KW"/>
</dbReference>
<dbReference type="GO" id="GO:0003899">
    <property type="term" value="F:DNA-directed RNA polymerase activity"/>
    <property type="evidence" value="ECO:0007669"/>
    <property type="project" value="InterPro"/>
</dbReference>
<dbReference type="GO" id="GO:0046872">
    <property type="term" value="F:metal ion binding"/>
    <property type="evidence" value="ECO:0007669"/>
    <property type="project" value="UniProtKB-KW"/>
</dbReference>
<dbReference type="GO" id="GO:0006269">
    <property type="term" value="P:DNA replication, synthesis of primer"/>
    <property type="evidence" value="ECO:0007669"/>
    <property type="project" value="UniProtKB-UniRule"/>
</dbReference>
<dbReference type="CDD" id="cd04860">
    <property type="entry name" value="AE_Prim_S"/>
    <property type="match status" value="1"/>
</dbReference>
<dbReference type="Gene3D" id="3.90.920.10">
    <property type="entry name" value="DNA primase, PRIM domain"/>
    <property type="match status" value="1"/>
</dbReference>
<dbReference type="HAMAP" id="MF_00700">
    <property type="entry name" value="DNA_primase_sml_arc"/>
    <property type="match status" value="1"/>
</dbReference>
<dbReference type="InterPro" id="IPR002755">
    <property type="entry name" value="DNA_primase_S"/>
</dbReference>
<dbReference type="InterPro" id="IPR014052">
    <property type="entry name" value="DNA_primase_ssu_euk/arc"/>
</dbReference>
<dbReference type="InterPro" id="IPR023639">
    <property type="entry name" value="DNA_primase_ssu_PriS"/>
</dbReference>
<dbReference type="NCBIfam" id="TIGR00335">
    <property type="entry name" value="primase_sml"/>
    <property type="match status" value="1"/>
</dbReference>
<dbReference type="PANTHER" id="PTHR10536">
    <property type="entry name" value="DNA PRIMASE SMALL SUBUNIT"/>
    <property type="match status" value="1"/>
</dbReference>
<dbReference type="Pfam" id="PF01896">
    <property type="entry name" value="DNA_primase_S"/>
    <property type="match status" value="1"/>
</dbReference>
<dbReference type="SUPFAM" id="SSF56747">
    <property type="entry name" value="Prim-pol domain"/>
    <property type="match status" value="1"/>
</dbReference>
<evidence type="ECO:0000255" key="1">
    <source>
        <dbReference type="HAMAP-Rule" id="MF_00700"/>
    </source>
</evidence>
<organism>
    <name type="scientific">Archaeoglobus fulgidus (strain ATCC 49558 / DSM 4304 / JCM 9628 / NBRC 100126 / VC-16)</name>
    <dbReference type="NCBI Taxonomy" id="224325"/>
    <lineage>
        <taxon>Archaea</taxon>
        <taxon>Methanobacteriati</taxon>
        <taxon>Methanobacteriota</taxon>
        <taxon>Archaeoglobi</taxon>
        <taxon>Archaeoglobales</taxon>
        <taxon>Archaeoglobaceae</taxon>
        <taxon>Archaeoglobus</taxon>
    </lineage>
</organism>
<sequence length="335" mass="38567">MLTKLFLKKKFEEYYSKNEVELPRKFKNREFAFVPLELLPDFVMHRHISFRSETDFRAYILSNVPAHIYFSSAYYERPAEDKMENKGWLGADLIFDIDADHLPVKAQSFEKALEMAKREIKKLTAVLRADFGIRDMKIYFSGGRGYHVHVHDEEFLSLGSAERREIVDYLRLNSPKIVVEDRFANSNAAKRVLNYLRKKLEEDERLTSKLKIKPADLKKEKLTKKVIRAVEKFDYSALSIYIDAPVTADVKRLIRLPGSLHGKTGLRVTEVEDIESFNPLKDALAFGDEAVVVKVARKLNLSIGDFSGKIYPGRVKLPEYAAVFLICRGDASYDS</sequence>
<name>PRIS_ARCFU</name>